<sequence>METFSLLEIFKAVILGIVQGITEWLPVSSTGHMILVDEFIKLNFSNTFISTFLVVIQFGSILAVLVIFFRKLNPFDSAKNIKQKKETVRLWLKVIIAVIPSGVIGILFEDDIDRLFFNSTVVAIALIVYGIIMIGLEKRNKRPKYKDFSQVTYKLALCIGLFQCLALIPGTSRSGSTIIGAVLLGTSRYVAAEFSFFLAIPTMLGASALKLLKAGFGFTGFEWLILGVGSVVAFVVSIVVIKFFMDYIKKHDFKVFGYYRIVLGIVVLAYFFLL</sequence>
<gene>
    <name evidence="1" type="primary">uppP1</name>
    <name type="synonym">bacA1</name>
    <name type="synonym">upk1</name>
    <name type="ordered locus">CD630_13320</name>
</gene>
<feature type="chain" id="PRO_0000290698" description="Undecaprenyl-diphosphatase 1">
    <location>
        <begin position="1"/>
        <end position="274"/>
    </location>
</feature>
<feature type="transmembrane region" description="Helical" evidence="1">
    <location>
        <begin position="7"/>
        <end position="27"/>
    </location>
</feature>
<feature type="transmembrane region" description="Helical" evidence="1">
    <location>
        <begin position="48"/>
        <end position="68"/>
    </location>
</feature>
<feature type="transmembrane region" description="Helical" evidence="1">
    <location>
        <begin position="88"/>
        <end position="108"/>
    </location>
</feature>
<feature type="transmembrane region" description="Helical" evidence="1">
    <location>
        <begin position="115"/>
        <end position="135"/>
    </location>
</feature>
<feature type="transmembrane region" description="Helical" evidence="1">
    <location>
        <begin position="151"/>
        <end position="171"/>
    </location>
</feature>
<feature type="transmembrane region" description="Helical" evidence="1">
    <location>
        <begin position="189"/>
        <end position="209"/>
    </location>
</feature>
<feature type="transmembrane region" description="Helical" evidence="1">
    <location>
        <begin position="221"/>
        <end position="241"/>
    </location>
</feature>
<feature type="transmembrane region" description="Helical" evidence="1">
    <location>
        <begin position="253"/>
        <end position="273"/>
    </location>
</feature>
<name>UPPP1_CLOD6</name>
<evidence type="ECO:0000255" key="1">
    <source>
        <dbReference type="HAMAP-Rule" id="MF_01006"/>
    </source>
</evidence>
<reference key="1">
    <citation type="journal article" date="2006" name="Nat. Genet.">
        <title>The multidrug-resistant human pathogen Clostridium difficile has a highly mobile, mosaic genome.</title>
        <authorList>
            <person name="Sebaihia M."/>
            <person name="Wren B.W."/>
            <person name="Mullany P."/>
            <person name="Fairweather N.F."/>
            <person name="Minton N."/>
            <person name="Stabler R."/>
            <person name="Thomson N.R."/>
            <person name="Roberts A.P."/>
            <person name="Cerdeno-Tarraga A.M."/>
            <person name="Wang H."/>
            <person name="Holden M.T.G."/>
            <person name="Wright A."/>
            <person name="Churcher C."/>
            <person name="Quail M.A."/>
            <person name="Baker S."/>
            <person name="Bason N."/>
            <person name="Brooks K."/>
            <person name="Chillingworth T."/>
            <person name="Cronin A."/>
            <person name="Davis P."/>
            <person name="Dowd L."/>
            <person name="Fraser A."/>
            <person name="Feltwell T."/>
            <person name="Hance Z."/>
            <person name="Holroyd S."/>
            <person name="Jagels K."/>
            <person name="Moule S."/>
            <person name="Mungall K."/>
            <person name="Price C."/>
            <person name="Rabbinowitsch E."/>
            <person name="Sharp S."/>
            <person name="Simmonds M."/>
            <person name="Stevens K."/>
            <person name="Unwin L."/>
            <person name="Whithead S."/>
            <person name="Dupuy B."/>
            <person name="Dougan G."/>
            <person name="Barrell B."/>
            <person name="Parkhill J."/>
        </authorList>
    </citation>
    <scope>NUCLEOTIDE SEQUENCE [LARGE SCALE GENOMIC DNA]</scope>
    <source>
        <strain>630</strain>
    </source>
</reference>
<keyword id="KW-0046">Antibiotic resistance</keyword>
<keyword id="KW-1003">Cell membrane</keyword>
<keyword id="KW-0133">Cell shape</keyword>
<keyword id="KW-0961">Cell wall biogenesis/degradation</keyword>
<keyword id="KW-0378">Hydrolase</keyword>
<keyword id="KW-0472">Membrane</keyword>
<keyword id="KW-0573">Peptidoglycan synthesis</keyword>
<keyword id="KW-1185">Reference proteome</keyword>
<keyword id="KW-0812">Transmembrane</keyword>
<keyword id="KW-1133">Transmembrane helix</keyword>
<organism>
    <name type="scientific">Clostridioides difficile (strain 630)</name>
    <name type="common">Peptoclostridium difficile</name>
    <dbReference type="NCBI Taxonomy" id="272563"/>
    <lineage>
        <taxon>Bacteria</taxon>
        <taxon>Bacillati</taxon>
        <taxon>Bacillota</taxon>
        <taxon>Clostridia</taxon>
        <taxon>Peptostreptococcales</taxon>
        <taxon>Peptostreptococcaceae</taxon>
        <taxon>Clostridioides</taxon>
    </lineage>
</organism>
<comment type="function">
    <text evidence="1">Catalyzes the dephosphorylation of undecaprenyl diphosphate (UPP). Confers resistance to bacitracin.</text>
</comment>
<comment type="catalytic activity">
    <reaction evidence="1">
        <text>di-trans,octa-cis-undecaprenyl diphosphate + H2O = di-trans,octa-cis-undecaprenyl phosphate + phosphate + H(+)</text>
        <dbReference type="Rhea" id="RHEA:28094"/>
        <dbReference type="ChEBI" id="CHEBI:15377"/>
        <dbReference type="ChEBI" id="CHEBI:15378"/>
        <dbReference type="ChEBI" id="CHEBI:43474"/>
        <dbReference type="ChEBI" id="CHEBI:58405"/>
        <dbReference type="ChEBI" id="CHEBI:60392"/>
        <dbReference type="EC" id="3.6.1.27"/>
    </reaction>
</comment>
<comment type="subcellular location">
    <subcellularLocation>
        <location evidence="1">Cell membrane</location>
        <topology evidence="1">Multi-pass membrane protein</topology>
    </subcellularLocation>
</comment>
<comment type="miscellaneous">
    <text>Bacitracin is thought to be involved in the inhibition of peptidoglycan synthesis by sequestering undecaprenyl diphosphate, thereby reducing the pool of lipid carrier available.</text>
</comment>
<comment type="similarity">
    <text evidence="1">Belongs to the UppP family.</text>
</comment>
<proteinExistence type="inferred from homology"/>
<dbReference type="EC" id="3.6.1.27" evidence="1"/>
<dbReference type="EMBL" id="AM180355">
    <property type="protein sequence ID" value="CAJ68190.1"/>
    <property type="molecule type" value="Genomic_DNA"/>
</dbReference>
<dbReference type="RefSeq" id="WP_009905410.1">
    <property type="nucleotide sequence ID" value="NZ_JAUPES010000015.1"/>
</dbReference>
<dbReference type="RefSeq" id="YP_001087828.1">
    <property type="nucleotide sequence ID" value="NC_009089.1"/>
</dbReference>
<dbReference type="SMR" id="Q18BJ5"/>
<dbReference type="STRING" id="272563.CD630_13320"/>
<dbReference type="EnsemblBacteria" id="CAJ68190">
    <property type="protein sequence ID" value="CAJ68190"/>
    <property type="gene ID" value="CD630_13320"/>
</dbReference>
<dbReference type="KEGG" id="cdf:CD630_13320"/>
<dbReference type="KEGG" id="pdc:CDIF630_01488"/>
<dbReference type="PATRIC" id="fig|272563.120.peg.1392"/>
<dbReference type="eggNOG" id="COG1968">
    <property type="taxonomic scope" value="Bacteria"/>
</dbReference>
<dbReference type="OrthoDB" id="9808289at2"/>
<dbReference type="PhylomeDB" id="Q18BJ5"/>
<dbReference type="BioCyc" id="PDIF272563:G12WB-1467-MONOMER"/>
<dbReference type="Proteomes" id="UP000001978">
    <property type="component" value="Chromosome"/>
</dbReference>
<dbReference type="GO" id="GO:0005886">
    <property type="term" value="C:plasma membrane"/>
    <property type="evidence" value="ECO:0007669"/>
    <property type="project" value="UniProtKB-SubCell"/>
</dbReference>
<dbReference type="GO" id="GO:0050380">
    <property type="term" value="F:undecaprenyl-diphosphatase activity"/>
    <property type="evidence" value="ECO:0007669"/>
    <property type="project" value="UniProtKB-UniRule"/>
</dbReference>
<dbReference type="GO" id="GO:0071555">
    <property type="term" value="P:cell wall organization"/>
    <property type="evidence" value="ECO:0007669"/>
    <property type="project" value="UniProtKB-KW"/>
</dbReference>
<dbReference type="GO" id="GO:0009252">
    <property type="term" value="P:peptidoglycan biosynthetic process"/>
    <property type="evidence" value="ECO:0007669"/>
    <property type="project" value="UniProtKB-KW"/>
</dbReference>
<dbReference type="GO" id="GO:0008360">
    <property type="term" value="P:regulation of cell shape"/>
    <property type="evidence" value="ECO:0007669"/>
    <property type="project" value="UniProtKB-KW"/>
</dbReference>
<dbReference type="GO" id="GO:0046677">
    <property type="term" value="P:response to antibiotic"/>
    <property type="evidence" value="ECO:0007669"/>
    <property type="project" value="UniProtKB-UniRule"/>
</dbReference>
<dbReference type="HAMAP" id="MF_01006">
    <property type="entry name" value="Undec_diphosphatase"/>
    <property type="match status" value="1"/>
</dbReference>
<dbReference type="InterPro" id="IPR003824">
    <property type="entry name" value="UppP"/>
</dbReference>
<dbReference type="NCBIfam" id="NF001389">
    <property type="entry name" value="PRK00281.1-2"/>
    <property type="match status" value="1"/>
</dbReference>
<dbReference type="NCBIfam" id="NF001390">
    <property type="entry name" value="PRK00281.1-4"/>
    <property type="match status" value="1"/>
</dbReference>
<dbReference type="NCBIfam" id="NF001391">
    <property type="entry name" value="PRK00281.1-5"/>
    <property type="match status" value="1"/>
</dbReference>
<dbReference type="NCBIfam" id="TIGR00753">
    <property type="entry name" value="undec_PP_bacA"/>
    <property type="match status" value="1"/>
</dbReference>
<dbReference type="PANTHER" id="PTHR30622">
    <property type="entry name" value="UNDECAPRENYL-DIPHOSPHATASE"/>
    <property type="match status" value="1"/>
</dbReference>
<dbReference type="PANTHER" id="PTHR30622:SF3">
    <property type="entry name" value="UNDECAPRENYL-DIPHOSPHATASE"/>
    <property type="match status" value="1"/>
</dbReference>
<dbReference type="Pfam" id="PF02673">
    <property type="entry name" value="BacA"/>
    <property type="match status" value="1"/>
</dbReference>
<protein>
    <recommendedName>
        <fullName evidence="1">Undecaprenyl-diphosphatase 1</fullName>
        <ecNumber evidence="1">3.6.1.27</ecNumber>
    </recommendedName>
    <alternativeName>
        <fullName evidence="1">Bacitracin resistance protein 1</fullName>
    </alternativeName>
    <alternativeName>
        <fullName evidence="1">Undecaprenyl pyrophosphate phosphatase 1</fullName>
    </alternativeName>
</protein>
<accession>Q18BJ5</accession>